<dbReference type="EC" id="3.1.4.-" evidence="5"/>
<dbReference type="EMBL" id="AL031004">
    <property type="protein sequence ID" value="CAA19746.1"/>
    <property type="status" value="ALT_SEQ"/>
    <property type="molecule type" value="Genomic_DNA"/>
</dbReference>
<dbReference type="EMBL" id="AL161579">
    <property type="protein sequence ID" value="CAB79895.1"/>
    <property type="status" value="ALT_SEQ"/>
    <property type="molecule type" value="Genomic_DNA"/>
</dbReference>
<dbReference type="EMBL" id="CP002687">
    <property type="protein sequence ID" value="AEE85955.1"/>
    <property type="molecule type" value="Genomic_DNA"/>
</dbReference>
<dbReference type="EMBL" id="AF370499">
    <property type="protein sequence ID" value="AAK43876.1"/>
    <property type="molecule type" value="mRNA"/>
</dbReference>
<dbReference type="PIR" id="T05093">
    <property type="entry name" value="T05093"/>
</dbReference>
<dbReference type="RefSeq" id="NP_567881.1">
    <property type="nucleotide sequence ID" value="NM_119326.4"/>
</dbReference>
<dbReference type="SMR" id="Q94K01"/>
<dbReference type="FunCoup" id="Q94K01">
    <property type="interactions" value="3448"/>
</dbReference>
<dbReference type="STRING" id="3702.Q94K01"/>
<dbReference type="PaxDb" id="3702-AT4G31770.1"/>
<dbReference type="ProteomicsDB" id="223982"/>
<dbReference type="DNASU" id="829305"/>
<dbReference type="EnsemblPlants" id="AT4G31770.1">
    <property type="protein sequence ID" value="AT4G31770.1"/>
    <property type="gene ID" value="AT4G31770"/>
</dbReference>
<dbReference type="GeneID" id="829305"/>
<dbReference type="Gramene" id="AT4G31770.1">
    <property type="protein sequence ID" value="AT4G31770.1"/>
    <property type="gene ID" value="AT4G31770"/>
</dbReference>
<dbReference type="KEGG" id="ath:AT4G31770"/>
<dbReference type="Araport" id="AT4G31770"/>
<dbReference type="TAIR" id="AT4G31770">
    <property type="gene designation" value="DBR1"/>
</dbReference>
<dbReference type="eggNOG" id="KOG2863">
    <property type="taxonomic scope" value="Eukaryota"/>
</dbReference>
<dbReference type="HOGENOM" id="CLU_005893_2_0_1"/>
<dbReference type="InParanoid" id="Q94K01"/>
<dbReference type="PhylomeDB" id="Q94K01"/>
<dbReference type="PRO" id="PR:Q94K01"/>
<dbReference type="Proteomes" id="UP000006548">
    <property type="component" value="Chromosome 4"/>
</dbReference>
<dbReference type="ExpressionAtlas" id="Q94K01">
    <property type="expression patterns" value="baseline and differential"/>
</dbReference>
<dbReference type="GO" id="GO:0005634">
    <property type="term" value="C:nucleus"/>
    <property type="evidence" value="ECO:0007669"/>
    <property type="project" value="UniProtKB-SubCell"/>
</dbReference>
<dbReference type="GO" id="GO:0046872">
    <property type="term" value="F:metal ion binding"/>
    <property type="evidence" value="ECO:0007669"/>
    <property type="project" value="UniProtKB-KW"/>
</dbReference>
<dbReference type="GO" id="GO:0008419">
    <property type="term" value="F:RNA lariat debranching enzyme activity"/>
    <property type="evidence" value="ECO:0000314"/>
    <property type="project" value="TAIR"/>
</dbReference>
<dbReference type="GO" id="GO:0009793">
    <property type="term" value="P:embryo development ending in seed dormancy"/>
    <property type="evidence" value="ECO:0000315"/>
    <property type="project" value="TAIR"/>
</dbReference>
<dbReference type="GO" id="GO:0006397">
    <property type="term" value="P:mRNA processing"/>
    <property type="evidence" value="ECO:0007669"/>
    <property type="project" value="UniProtKB-KW"/>
</dbReference>
<dbReference type="CDD" id="cd00844">
    <property type="entry name" value="MPP_Dbr1_N"/>
    <property type="match status" value="1"/>
</dbReference>
<dbReference type="FunFam" id="3.60.21.10:FF:000035">
    <property type="entry name" value="Lariat debranching enzyme"/>
    <property type="match status" value="1"/>
</dbReference>
<dbReference type="Gene3D" id="3.60.21.10">
    <property type="match status" value="1"/>
</dbReference>
<dbReference type="InterPro" id="IPR004843">
    <property type="entry name" value="Calcineurin-like_PHP_ApaH"/>
</dbReference>
<dbReference type="InterPro" id="IPR007708">
    <property type="entry name" value="DBR1_C"/>
</dbReference>
<dbReference type="InterPro" id="IPR041816">
    <property type="entry name" value="Dbr1_N"/>
</dbReference>
<dbReference type="InterPro" id="IPR029052">
    <property type="entry name" value="Metallo-depent_PP-like"/>
</dbReference>
<dbReference type="PANTHER" id="PTHR12849:SF0">
    <property type="entry name" value="LARIAT DEBRANCHING ENZYME"/>
    <property type="match status" value="1"/>
</dbReference>
<dbReference type="PANTHER" id="PTHR12849">
    <property type="entry name" value="RNA LARIAT DEBRANCHING ENZYME"/>
    <property type="match status" value="1"/>
</dbReference>
<dbReference type="Pfam" id="PF05011">
    <property type="entry name" value="DBR1"/>
    <property type="match status" value="1"/>
</dbReference>
<dbReference type="Pfam" id="PF00149">
    <property type="entry name" value="Metallophos"/>
    <property type="match status" value="1"/>
</dbReference>
<dbReference type="SMART" id="SM01124">
    <property type="entry name" value="DBR1"/>
    <property type="match status" value="1"/>
</dbReference>
<dbReference type="SUPFAM" id="SSF56300">
    <property type="entry name" value="Metallo-dependent phosphatases"/>
    <property type="match status" value="1"/>
</dbReference>
<keyword id="KW-0217">Developmental protein</keyword>
<keyword id="KW-0378">Hydrolase</keyword>
<keyword id="KW-0408">Iron</keyword>
<keyword id="KW-0464">Manganese</keyword>
<keyword id="KW-0479">Metal-binding</keyword>
<keyword id="KW-0507">mRNA processing</keyword>
<keyword id="KW-0539">Nucleus</keyword>
<keyword id="KW-1185">Reference proteome</keyword>
<keyword id="KW-0862">Zinc</keyword>
<accession>Q94K01</accession>
<accession>O81771</accession>
<proteinExistence type="evidence at protein level"/>
<organism>
    <name type="scientific">Arabidopsis thaliana</name>
    <name type="common">Mouse-ear cress</name>
    <dbReference type="NCBI Taxonomy" id="3702"/>
    <lineage>
        <taxon>Eukaryota</taxon>
        <taxon>Viridiplantae</taxon>
        <taxon>Streptophyta</taxon>
        <taxon>Embryophyta</taxon>
        <taxon>Tracheophyta</taxon>
        <taxon>Spermatophyta</taxon>
        <taxon>Magnoliopsida</taxon>
        <taxon>eudicotyledons</taxon>
        <taxon>Gunneridae</taxon>
        <taxon>Pentapetalae</taxon>
        <taxon>rosids</taxon>
        <taxon>malvids</taxon>
        <taxon>Brassicales</taxon>
        <taxon>Brassicaceae</taxon>
        <taxon>Camelineae</taxon>
        <taxon>Arabidopsis</taxon>
    </lineage>
</organism>
<comment type="function">
    <text evidence="5">Cleaves the 2'-5' phosphodiester linkage at the branch point of lariat intron pre-mRNAs after splicing and converts them into linear molecules that are subsequently degraded. It thereby facilitates ribonucleotide turnover. It may also participate in retrovirus replication via an RNA lariat intermediate in cDNA synthesis. Plays en essential role during embryogenesis.</text>
</comment>
<comment type="cofactor">
    <cofactor evidence="2">
        <name>Fe(2+)</name>
        <dbReference type="ChEBI" id="CHEBI:29033"/>
    </cofactor>
    <cofactor evidence="2">
        <name>Zn(2+)</name>
        <dbReference type="ChEBI" id="CHEBI:29105"/>
    </cofactor>
    <cofactor evidence="3">
        <name>Mn(2+)</name>
        <dbReference type="ChEBI" id="CHEBI:29035"/>
    </cofactor>
    <text evidence="2">Binds 2 divalent metal cations per subunit.</text>
</comment>
<comment type="activity regulation">
    <text evidence="2">Active in presence of diverse metals including Fe(2+), Zn(2+), Mn(2+) (By similarity). Binds two metal cations in two adjacent alpha and beta metal-binding pockets (By similarity).</text>
</comment>
<comment type="subcellular location">
    <subcellularLocation>
        <location evidence="6">Nucleus</location>
    </subcellularLocation>
</comment>
<comment type="tissue specificity">
    <text evidence="5">Widely expressed. Expressed in roots, stems, cauline and rosette leaves, flower buds and siliques.</text>
</comment>
<comment type="similarity">
    <text evidence="6">Belongs to the lariat debranching enzyme family.</text>
</comment>
<comment type="sequence caution" evidence="6">
    <conflict type="erroneous gene model prediction">
        <sequence resource="EMBL-CDS" id="CAA19746"/>
    </conflict>
</comment>
<comment type="sequence caution" evidence="6">
    <conflict type="erroneous gene model prediction">
        <sequence resource="EMBL-CDS" id="CAB79895"/>
    </conflict>
</comment>
<protein>
    <recommendedName>
        <fullName>Lariat debranching enzyme</fullName>
        <shortName>AtDBR1</shortName>
        <ecNumber evidence="5">3.1.4.-</ecNumber>
    </recommendedName>
</protein>
<evidence type="ECO:0000250" key="1">
    <source>
        <dbReference type="UniProtKB" id="C4M1P9"/>
    </source>
</evidence>
<evidence type="ECO:0000250" key="2">
    <source>
        <dbReference type="UniProtKB" id="P24309"/>
    </source>
</evidence>
<evidence type="ECO:0000250" key="3">
    <source>
        <dbReference type="UniProtKB" id="Q9UK59"/>
    </source>
</evidence>
<evidence type="ECO:0000256" key="4">
    <source>
        <dbReference type="SAM" id="MobiDB-lite"/>
    </source>
</evidence>
<evidence type="ECO:0000269" key="5">
    <source>
    </source>
</evidence>
<evidence type="ECO:0000305" key="6"/>
<reference key="1">
    <citation type="journal article" date="1999" name="Nature">
        <title>Sequence and analysis of chromosome 4 of the plant Arabidopsis thaliana.</title>
        <authorList>
            <person name="Mayer K.F.X."/>
            <person name="Schueller C."/>
            <person name="Wambutt R."/>
            <person name="Murphy G."/>
            <person name="Volckaert G."/>
            <person name="Pohl T."/>
            <person name="Duesterhoeft A."/>
            <person name="Stiekema W."/>
            <person name="Entian K.-D."/>
            <person name="Terryn N."/>
            <person name="Harris B."/>
            <person name="Ansorge W."/>
            <person name="Brandt P."/>
            <person name="Grivell L.A."/>
            <person name="Rieger M."/>
            <person name="Weichselgartner M."/>
            <person name="de Simone V."/>
            <person name="Obermaier B."/>
            <person name="Mache R."/>
            <person name="Mueller M."/>
            <person name="Kreis M."/>
            <person name="Delseny M."/>
            <person name="Puigdomenech P."/>
            <person name="Watson M."/>
            <person name="Schmidtheini T."/>
            <person name="Reichert B."/>
            <person name="Portetelle D."/>
            <person name="Perez-Alonso M."/>
            <person name="Boutry M."/>
            <person name="Bancroft I."/>
            <person name="Vos P."/>
            <person name="Hoheisel J."/>
            <person name="Zimmermann W."/>
            <person name="Wedler H."/>
            <person name="Ridley P."/>
            <person name="Langham S.-A."/>
            <person name="McCullagh B."/>
            <person name="Bilham L."/>
            <person name="Robben J."/>
            <person name="van der Schueren J."/>
            <person name="Grymonprez B."/>
            <person name="Chuang Y.-J."/>
            <person name="Vandenbussche F."/>
            <person name="Braeken M."/>
            <person name="Weltjens I."/>
            <person name="Voet M."/>
            <person name="Bastiaens I."/>
            <person name="Aert R."/>
            <person name="Defoor E."/>
            <person name="Weitzenegger T."/>
            <person name="Bothe G."/>
            <person name="Ramsperger U."/>
            <person name="Hilbert H."/>
            <person name="Braun M."/>
            <person name="Holzer E."/>
            <person name="Brandt A."/>
            <person name="Peters S."/>
            <person name="van Staveren M."/>
            <person name="Dirkse W."/>
            <person name="Mooijman P."/>
            <person name="Klein Lankhorst R."/>
            <person name="Rose M."/>
            <person name="Hauf J."/>
            <person name="Koetter P."/>
            <person name="Berneiser S."/>
            <person name="Hempel S."/>
            <person name="Feldpausch M."/>
            <person name="Lamberth S."/>
            <person name="Van den Daele H."/>
            <person name="De Keyser A."/>
            <person name="Buysshaert C."/>
            <person name="Gielen J."/>
            <person name="Villarroel R."/>
            <person name="De Clercq R."/>
            <person name="van Montagu M."/>
            <person name="Rogers J."/>
            <person name="Cronin A."/>
            <person name="Quail M.A."/>
            <person name="Bray-Allen S."/>
            <person name="Clark L."/>
            <person name="Doggett J."/>
            <person name="Hall S."/>
            <person name="Kay M."/>
            <person name="Lennard N."/>
            <person name="McLay K."/>
            <person name="Mayes R."/>
            <person name="Pettett A."/>
            <person name="Rajandream M.A."/>
            <person name="Lyne M."/>
            <person name="Benes V."/>
            <person name="Rechmann S."/>
            <person name="Borkova D."/>
            <person name="Bloecker H."/>
            <person name="Scharfe M."/>
            <person name="Grimm M."/>
            <person name="Loehnert T.-H."/>
            <person name="Dose S."/>
            <person name="de Haan M."/>
            <person name="Maarse A.C."/>
            <person name="Schaefer M."/>
            <person name="Mueller-Auer S."/>
            <person name="Gabel C."/>
            <person name="Fuchs M."/>
            <person name="Fartmann B."/>
            <person name="Granderath K."/>
            <person name="Dauner D."/>
            <person name="Herzl A."/>
            <person name="Neumann S."/>
            <person name="Argiriou A."/>
            <person name="Vitale D."/>
            <person name="Liguori R."/>
            <person name="Piravandi E."/>
            <person name="Massenet O."/>
            <person name="Quigley F."/>
            <person name="Clabauld G."/>
            <person name="Muendlein A."/>
            <person name="Felber R."/>
            <person name="Schnabl S."/>
            <person name="Hiller R."/>
            <person name="Schmidt W."/>
            <person name="Lecharny A."/>
            <person name="Aubourg S."/>
            <person name="Chefdor F."/>
            <person name="Cooke R."/>
            <person name="Berger C."/>
            <person name="Monfort A."/>
            <person name="Casacuberta E."/>
            <person name="Gibbons T."/>
            <person name="Weber N."/>
            <person name="Vandenbol M."/>
            <person name="Bargues M."/>
            <person name="Terol J."/>
            <person name="Torres A."/>
            <person name="Perez-Perez A."/>
            <person name="Purnelle B."/>
            <person name="Bent E."/>
            <person name="Johnson S."/>
            <person name="Tacon D."/>
            <person name="Jesse T."/>
            <person name="Heijnen L."/>
            <person name="Schwarz S."/>
            <person name="Scholler P."/>
            <person name="Heber S."/>
            <person name="Francs P."/>
            <person name="Bielke C."/>
            <person name="Frishman D."/>
            <person name="Haase D."/>
            <person name="Lemcke K."/>
            <person name="Mewes H.-W."/>
            <person name="Stocker S."/>
            <person name="Zaccaria P."/>
            <person name="Bevan M."/>
            <person name="Wilson R.K."/>
            <person name="de la Bastide M."/>
            <person name="Habermann K."/>
            <person name="Parnell L."/>
            <person name="Dedhia N."/>
            <person name="Gnoj L."/>
            <person name="Schutz K."/>
            <person name="Huang E."/>
            <person name="Spiegel L."/>
            <person name="Sekhon M."/>
            <person name="Murray J."/>
            <person name="Sheet P."/>
            <person name="Cordes M."/>
            <person name="Abu-Threideh J."/>
            <person name="Stoneking T."/>
            <person name="Kalicki J."/>
            <person name="Graves T."/>
            <person name="Harmon G."/>
            <person name="Edwards J."/>
            <person name="Latreille P."/>
            <person name="Courtney L."/>
            <person name="Cloud J."/>
            <person name="Abbott A."/>
            <person name="Scott K."/>
            <person name="Johnson D."/>
            <person name="Minx P."/>
            <person name="Bentley D."/>
            <person name="Fulton B."/>
            <person name="Miller N."/>
            <person name="Greco T."/>
            <person name="Kemp K."/>
            <person name="Kramer J."/>
            <person name="Fulton L."/>
            <person name="Mardis E."/>
            <person name="Dante M."/>
            <person name="Pepin K."/>
            <person name="Hillier L.W."/>
            <person name="Nelson J."/>
            <person name="Spieth J."/>
            <person name="Ryan E."/>
            <person name="Andrews S."/>
            <person name="Geisel C."/>
            <person name="Layman D."/>
            <person name="Du H."/>
            <person name="Ali J."/>
            <person name="Berghoff A."/>
            <person name="Jones K."/>
            <person name="Drone K."/>
            <person name="Cotton M."/>
            <person name="Joshu C."/>
            <person name="Antonoiu B."/>
            <person name="Zidanic M."/>
            <person name="Strong C."/>
            <person name="Sun H."/>
            <person name="Lamar B."/>
            <person name="Yordan C."/>
            <person name="Ma P."/>
            <person name="Zhong J."/>
            <person name="Preston R."/>
            <person name="Vil D."/>
            <person name="Shekher M."/>
            <person name="Matero A."/>
            <person name="Shah R."/>
            <person name="Swaby I.K."/>
            <person name="O'Shaughnessy A."/>
            <person name="Rodriguez M."/>
            <person name="Hoffman J."/>
            <person name="Till S."/>
            <person name="Granat S."/>
            <person name="Shohdy N."/>
            <person name="Hasegawa A."/>
            <person name="Hameed A."/>
            <person name="Lodhi M."/>
            <person name="Johnson A."/>
            <person name="Chen E."/>
            <person name="Marra M.A."/>
            <person name="Martienssen R."/>
            <person name="McCombie W.R."/>
        </authorList>
    </citation>
    <scope>NUCLEOTIDE SEQUENCE [LARGE SCALE GENOMIC DNA]</scope>
    <source>
        <strain>cv. Columbia</strain>
    </source>
</reference>
<reference key="2">
    <citation type="journal article" date="2017" name="Plant J.">
        <title>Araport11: a complete reannotation of the Arabidopsis thaliana reference genome.</title>
        <authorList>
            <person name="Cheng C.Y."/>
            <person name="Krishnakumar V."/>
            <person name="Chan A.P."/>
            <person name="Thibaud-Nissen F."/>
            <person name="Schobel S."/>
            <person name="Town C.D."/>
        </authorList>
    </citation>
    <scope>GENOME REANNOTATION</scope>
    <source>
        <strain>cv. Columbia</strain>
    </source>
</reference>
<reference key="3">
    <citation type="journal article" date="2003" name="Science">
        <title>Empirical analysis of transcriptional activity in the Arabidopsis genome.</title>
        <authorList>
            <person name="Yamada K."/>
            <person name="Lim J."/>
            <person name="Dale J.M."/>
            <person name="Chen H."/>
            <person name="Shinn P."/>
            <person name="Palm C.J."/>
            <person name="Southwick A.M."/>
            <person name="Wu H.C."/>
            <person name="Kim C.J."/>
            <person name="Nguyen M."/>
            <person name="Pham P.K."/>
            <person name="Cheuk R.F."/>
            <person name="Karlin-Newmann G."/>
            <person name="Liu S.X."/>
            <person name="Lam B."/>
            <person name="Sakano H."/>
            <person name="Wu T."/>
            <person name="Yu G."/>
            <person name="Miranda M."/>
            <person name="Quach H.L."/>
            <person name="Tripp M."/>
            <person name="Chang C.H."/>
            <person name="Lee J.M."/>
            <person name="Toriumi M.J."/>
            <person name="Chan M.M."/>
            <person name="Tang C.C."/>
            <person name="Onodera C.S."/>
            <person name="Deng J.M."/>
            <person name="Akiyama K."/>
            <person name="Ansari Y."/>
            <person name="Arakawa T."/>
            <person name="Banh J."/>
            <person name="Banno F."/>
            <person name="Bowser L."/>
            <person name="Brooks S.Y."/>
            <person name="Carninci P."/>
            <person name="Chao Q."/>
            <person name="Choy N."/>
            <person name="Enju A."/>
            <person name="Goldsmith A.D."/>
            <person name="Gurjal M."/>
            <person name="Hansen N.F."/>
            <person name="Hayashizaki Y."/>
            <person name="Johnson-Hopson C."/>
            <person name="Hsuan V.W."/>
            <person name="Iida K."/>
            <person name="Karnes M."/>
            <person name="Khan S."/>
            <person name="Koesema E."/>
            <person name="Ishida J."/>
            <person name="Jiang P.X."/>
            <person name="Jones T."/>
            <person name="Kawai J."/>
            <person name="Kamiya A."/>
            <person name="Meyers C."/>
            <person name="Nakajima M."/>
            <person name="Narusaka M."/>
            <person name="Seki M."/>
            <person name="Sakurai T."/>
            <person name="Satou M."/>
            <person name="Tamse R."/>
            <person name="Vaysberg M."/>
            <person name="Wallender E.K."/>
            <person name="Wong C."/>
            <person name="Yamamura Y."/>
            <person name="Yuan S."/>
            <person name="Shinozaki K."/>
            <person name="Davis R.W."/>
            <person name="Theologis A."/>
            <person name="Ecker J.R."/>
        </authorList>
    </citation>
    <scope>NUCLEOTIDE SEQUENCE [LARGE SCALE MRNA]</scope>
    <source>
        <strain>cv. Columbia</strain>
    </source>
</reference>
<reference key="4">
    <citation type="journal article" date="2004" name="J. Biol. Chem.">
        <title>An Arabidopsis RNA lariat debranching enzyme is essential for embryogenesis.</title>
        <authorList>
            <person name="Wang H."/>
            <person name="Hill K."/>
            <person name="Perry S.E."/>
        </authorList>
    </citation>
    <scope>FUNCTION</scope>
    <scope>CATALYTIC ACTIVITY</scope>
    <scope>TISSUE SPECIFICITY</scope>
</reference>
<sequence>MKIAIEGCMHGDLDNVYKTIQHYEQIHNTKVDLLLCCGDFQAVRNEKDMDSLNVPRKYREMKSFWKYYSGQEVAPIPTIFIGGNHEASNYLWELYYGGWAATNIYFLGFAGVVKFGNVRIGGLSGIYNERHYRSGHFERPPYNESTIRSVYHVRDYDVQKLMQLEEPLDIFLSHDWPVGITDYGDSESLMRQKPYFRQEIEEKTLGSKPAALLLEKLKPQYWFSAHLHCKFAAAVQHGNDGSVTKFLALDKCLPGKKFLQIIEIESEPGPFEVLYDEEWLAITRKFNSIFPLTRRYTNVSTAGTIQESREWVRKKLEERQFKPFEFARTVPAYNPSQRVFDSIPEIPQNPQTLSLLELLGLPYLLDSSPVTGERTDIPASLAPSDLPTYDSEEIPIDDIDEIEEMEEAKADDHTRDDA</sequence>
<name>DBR1_ARATH</name>
<feature type="chain" id="PRO_0000250369" description="Lariat debranching enzyme">
    <location>
        <begin position="1"/>
        <end position="418"/>
    </location>
</feature>
<feature type="region of interest" description="Lariat recognition loop" evidence="1">
    <location>
        <begin position="124"/>
        <end position="154"/>
    </location>
</feature>
<feature type="region of interest" description="Disordered" evidence="4">
    <location>
        <begin position="372"/>
        <end position="418"/>
    </location>
</feature>
<feature type="compositionally biased region" description="Acidic residues" evidence="4">
    <location>
        <begin position="390"/>
        <end position="406"/>
    </location>
</feature>
<feature type="compositionally biased region" description="Basic and acidic residues" evidence="4">
    <location>
        <begin position="407"/>
        <end position="418"/>
    </location>
</feature>
<feature type="binding site" evidence="1">
    <location>
        <position position="8"/>
    </location>
    <ligand>
        <name>a divalent metal cation</name>
        <dbReference type="ChEBI" id="CHEBI:60240"/>
        <label>1</label>
    </ligand>
</feature>
<feature type="binding site" evidence="1">
    <location>
        <position position="10"/>
    </location>
    <ligand>
        <name>a divalent metal cation</name>
        <dbReference type="ChEBI" id="CHEBI:60240"/>
        <label>1</label>
    </ligand>
</feature>
<feature type="binding site" evidence="1">
    <location>
        <position position="39"/>
    </location>
    <ligand>
        <name>a divalent metal cation</name>
        <dbReference type="ChEBI" id="CHEBI:60240"/>
        <label>2</label>
    </ligand>
</feature>
<feature type="binding site" evidence="1">
    <location>
        <position position="84"/>
    </location>
    <ligand>
        <name>a divalent metal cation</name>
        <dbReference type="ChEBI" id="CHEBI:60240"/>
        <label>2</label>
    </ligand>
</feature>
<feature type="binding site" evidence="1">
    <location>
        <position position="174"/>
    </location>
    <ligand>
        <name>a divalent metal cation</name>
        <dbReference type="ChEBI" id="CHEBI:60240"/>
        <label>2</label>
    </ligand>
</feature>
<feature type="binding site" evidence="1">
    <location>
        <position position="226"/>
    </location>
    <ligand>
        <name>a divalent metal cation</name>
        <dbReference type="ChEBI" id="CHEBI:60240"/>
        <label>2</label>
    </ligand>
</feature>
<feature type="binding site" evidence="1">
    <location>
        <position position="228"/>
    </location>
    <ligand>
        <name>a divalent metal cation</name>
        <dbReference type="ChEBI" id="CHEBI:60240"/>
        <label>1</label>
    </ligand>
</feature>
<gene>
    <name type="primary">DBR1</name>
    <name type="ordered locus">At4g31770</name>
    <name type="ORF">F28M20.40</name>
</gene>